<sequence length="677" mass="78291">MSKQNKLTKVLDNDLDDIDIEEDDSTNRKFESMSEDEETPGMCCECTDQPAEVVCLQCQDELCTVCSTSLHRRGSRRSHIFKNKHGQELDYDELNKRDRQPPLHGKEDEKVQNNNNNNNNTNNTNNIEMDDNKSINNNNNNINSINSMYRGTSNLLNPLPFHHTNQQRNGGGSNNHQINNHHKDEDEEIDEDEEKFIHKNENFTDFIPRLSKDWFTERSKYIPIRLNIRERNDLRLLEAALHVSEYTDKIDIIHVGGSKSKRINDQLRGMCAILSGLLVASDFKKGQQLVENKDFFENEEFFQNVFEIGRRHKIMNPAKMRTEYGKMIHLLQDAADEDVKKNLSGLNMIKPLKTVFLFLDERNGLKLLEDPLLELATREVLAENKTRPQIQREIREKEHAIKTLSRRYSSSMLKSEEIEVCIYSICDNHTFLRENRDPVKKMKHLLKEYFSPNQSERGFSLALEHGIGGARLSHNHRKQYNYVYQSLSLWQHILHDMFKLWYFAEIDLLCGHRYQLSNTGQGLNRIQQCPNVGKIMHSILRQTQKKVGDDWVGSSVIHLGDHNVPNSLVFIDKYTQISRILSPIVLTIEYIPKITDPNLVAYIKNTFGGPQTLTKIILCDFFKHAFDGSGADNFFDAGSCIDGRLTSAWQWSAQIAKKPYYPIFLLSGFSGFDGSFN</sequence>
<name>U652_DICDI</name>
<comment type="similarity">
    <text evidence="3">Belongs to the UPF0652 family.</text>
</comment>
<organism>
    <name type="scientific">Dictyostelium discoideum</name>
    <name type="common">Social amoeba</name>
    <dbReference type="NCBI Taxonomy" id="44689"/>
    <lineage>
        <taxon>Eukaryota</taxon>
        <taxon>Amoebozoa</taxon>
        <taxon>Evosea</taxon>
        <taxon>Eumycetozoa</taxon>
        <taxon>Dictyostelia</taxon>
        <taxon>Dictyosteliales</taxon>
        <taxon>Dictyosteliaceae</taxon>
        <taxon>Dictyostelium</taxon>
    </lineage>
</organism>
<keyword id="KW-0479">Metal-binding</keyword>
<keyword id="KW-1185">Reference proteome</keyword>
<keyword id="KW-0862">Zinc</keyword>
<keyword id="KW-0863">Zinc-finger</keyword>
<proteinExistence type="inferred from homology"/>
<accession>Q54BM8</accession>
<gene>
    <name type="ORF">DDB_G0293552</name>
</gene>
<feature type="chain" id="PRO_0000350764" description="UPF0652 protein">
    <location>
        <begin position="1"/>
        <end position="677"/>
    </location>
</feature>
<feature type="zinc finger region" description="B box-type; atypical" evidence="1">
    <location>
        <begin position="38"/>
        <end position="84"/>
    </location>
</feature>
<feature type="region of interest" description="Disordered" evidence="2">
    <location>
        <begin position="91"/>
        <end position="142"/>
    </location>
</feature>
<feature type="region of interest" description="Disordered" evidence="2">
    <location>
        <begin position="156"/>
        <end position="192"/>
    </location>
</feature>
<feature type="compositionally biased region" description="Basic and acidic residues" evidence="2">
    <location>
        <begin position="91"/>
        <end position="111"/>
    </location>
</feature>
<feature type="compositionally biased region" description="Low complexity" evidence="2">
    <location>
        <begin position="113"/>
        <end position="126"/>
    </location>
</feature>
<feature type="compositionally biased region" description="Polar residues" evidence="2">
    <location>
        <begin position="163"/>
        <end position="178"/>
    </location>
</feature>
<feature type="binding site" evidence="1">
    <location>
        <position position="43"/>
    </location>
    <ligand>
        <name>Zn(2+)</name>
        <dbReference type="ChEBI" id="CHEBI:29105"/>
    </ligand>
</feature>
<feature type="binding site" evidence="1">
    <location>
        <position position="46"/>
    </location>
    <ligand>
        <name>Zn(2+)</name>
        <dbReference type="ChEBI" id="CHEBI:29105"/>
    </ligand>
</feature>
<feature type="binding site" evidence="1">
    <location>
        <position position="66"/>
    </location>
    <ligand>
        <name>Zn(2+)</name>
        <dbReference type="ChEBI" id="CHEBI:29105"/>
    </ligand>
</feature>
<feature type="binding site" evidence="1">
    <location>
        <position position="71"/>
    </location>
    <ligand>
        <name>Zn(2+)</name>
        <dbReference type="ChEBI" id="CHEBI:29105"/>
    </ligand>
</feature>
<evidence type="ECO:0000255" key="1">
    <source>
        <dbReference type="PROSITE-ProRule" id="PRU00024"/>
    </source>
</evidence>
<evidence type="ECO:0000256" key="2">
    <source>
        <dbReference type="SAM" id="MobiDB-lite"/>
    </source>
</evidence>
<evidence type="ECO:0000305" key="3"/>
<protein>
    <recommendedName>
        <fullName>UPF0652 protein</fullName>
    </recommendedName>
</protein>
<reference key="1">
    <citation type="journal article" date="2005" name="Nature">
        <title>The genome of the social amoeba Dictyostelium discoideum.</title>
        <authorList>
            <person name="Eichinger L."/>
            <person name="Pachebat J.A."/>
            <person name="Gloeckner G."/>
            <person name="Rajandream M.A."/>
            <person name="Sucgang R."/>
            <person name="Berriman M."/>
            <person name="Song J."/>
            <person name="Olsen R."/>
            <person name="Szafranski K."/>
            <person name="Xu Q."/>
            <person name="Tunggal B."/>
            <person name="Kummerfeld S."/>
            <person name="Madera M."/>
            <person name="Konfortov B.A."/>
            <person name="Rivero F."/>
            <person name="Bankier A.T."/>
            <person name="Lehmann R."/>
            <person name="Hamlin N."/>
            <person name="Davies R."/>
            <person name="Gaudet P."/>
            <person name="Fey P."/>
            <person name="Pilcher K."/>
            <person name="Chen G."/>
            <person name="Saunders D."/>
            <person name="Sodergren E.J."/>
            <person name="Davis P."/>
            <person name="Kerhornou A."/>
            <person name="Nie X."/>
            <person name="Hall N."/>
            <person name="Anjard C."/>
            <person name="Hemphill L."/>
            <person name="Bason N."/>
            <person name="Farbrother P."/>
            <person name="Desany B."/>
            <person name="Just E."/>
            <person name="Morio T."/>
            <person name="Rost R."/>
            <person name="Churcher C.M."/>
            <person name="Cooper J."/>
            <person name="Haydock S."/>
            <person name="van Driessche N."/>
            <person name="Cronin A."/>
            <person name="Goodhead I."/>
            <person name="Muzny D.M."/>
            <person name="Mourier T."/>
            <person name="Pain A."/>
            <person name="Lu M."/>
            <person name="Harper D."/>
            <person name="Lindsay R."/>
            <person name="Hauser H."/>
            <person name="James K.D."/>
            <person name="Quiles M."/>
            <person name="Madan Babu M."/>
            <person name="Saito T."/>
            <person name="Buchrieser C."/>
            <person name="Wardroper A."/>
            <person name="Felder M."/>
            <person name="Thangavelu M."/>
            <person name="Johnson D."/>
            <person name="Knights A."/>
            <person name="Loulseged H."/>
            <person name="Mungall K.L."/>
            <person name="Oliver K."/>
            <person name="Price C."/>
            <person name="Quail M.A."/>
            <person name="Urushihara H."/>
            <person name="Hernandez J."/>
            <person name="Rabbinowitsch E."/>
            <person name="Steffen D."/>
            <person name="Sanders M."/>
            <person name="Ma J."/>
            <person name="Kohara Y."/>
            <person name="Sharp S."/>
            <person name="Simmonds M.N."/>
            <person name="Spiegler S."/>
            <person name="Tivey A."/>
            <person name="Sugano S."/>
            <person name="White B."/>
            <person name="Walker D."/>
            <person name="Woodward J.R."/>
            <person name="Winckler T."/>
            <person name="Tanaka Y."/>
            <person name="Shaulsky G."/>
            <person name="Schleicher M."/>
            <person name="Weinstock G.M."/>
            <person name="Rosenthal A."/>
            <person name="Cox E.C."/>
            <person name="Chisholm R.L."/>
            <person name="Gibbs R.A."/>
            <person name="Loomis W.F."/>
            <person name="Platzer M."/>
            <person name="Kay R.R."/>
            <person name="Williams J.G."/>
            <person name="Dear P.H."/>
            <person name="Noegel A.A."/>
            <person name="Barrell B.G."/>
            <person name="Kuspa A."/>
        </authorList>
    </citation>
    <scope>NUCLEOTIDE SEQUENCE [LARGE SCALE GENOMIC DNA]</scope>
    <source>
        <strain>AX4</strain>
    </source>
</reference>
<dbReference type="EMBL" id="AAFI02000218">
    <property type="protein sequence ID" value="EAL60588.1"/>
    <property type="molecule type" value="Genomic_DNA"/>
</dbReference>
<dbReference type="RefSeq" id="XP_629001.1">
    <property type="nucleotide sequence ID" value="XM_628999.1"/>
</dbReference>
<dbReference type="SMR" id="Q54BM8"/>
<dbReference type="PaxDb" id="44689-DDB0192000"/>
<dbReference type="EnsemblProtists" id="EAL60588">
    <property type="protein sequence ID" value="EAL60588"/>
    <property type="gene ID" value="DDB_G0293552"/>
</dbReference>
<dbReference type="GeneID" id="8629285"/>
<dbReference type="KEGG" id="ddi:DDB_G0293552"/>
<dbReference type="dictyBase" id="DDB_G0293552"/>
<dbReference type="VEuPathDB" id="AmoebaDB:DDB_G0293552"/>
<dbReference type="eggNOG" id="ENOG502QRJJ">
    <property type="taxonomic scope" value="Eukaryota"/>
</dbReference>
<dbReference type="HOGENOM" id="CLU_021807_0_0_1"/>
<dbReference type="InParanoid" id="Q54BM8"/>
<dbReference type="OMA" id="EKQAGMQ"/>
<dbReference type="PhylomeDB" id="Q54BM8"/>
<dbReference type="PRO" id="PR:Q54BM8"/>
<dbReference type="Proteomes" id="UP000002195">
    <property type="component" value="Chromosome 6"/>
</dbReference>
<dbReference type="GO" id="GO:0008270">
    <property type="term" value="F:zinc ion binding"/>
    <property type="evidence" value="ECO:0007669"/>
    <property type="project" value="UniProtKB-KW"/>
</dbReference>
<dbReference type="InterPro" id="IPR018553">
    <property type="entry name" value="DUF2009"/>
</dbReference>
<dbReference type="InterPro" id="IPR000315">
    <property type="entry name" value="Znf_B-box"/>
</dbReference>
<dbReference type="PANTHER" id="PTHR31560">
    <property type="entry name" value="UPF0652 PROTEIN C16A11.03C-RELATED"/>
    <property type="match status" value="1"/>
</dbReference>
<dbReference type="PANTHER" id="PTHR31560:SF0">
    <property type="entry name" value="UPF0652 PROTEIN C22H10.08"/>
    <property type="match status" value="1"/>
</dbReference>
<dbReference type="Pfam" id="PF22586">
    <property type="entry name" value="ANCHR-like_BBOX"/>
    <property type="match status" value="1"/>
</dbReference>
<dbReference type="Pfam" id="PF09418">
    <property type="entry name" value="DUF2009"/>
    <property type="match status" value="1"/>
</dbReference>
<dbReference type="PROSITE" id="PS50119">
    <property type="entry name" value="ZF_BBOX"/>
    <property type="match status" value="1"/>
</dbReference>